<gene>
    <name evidence="1" type="primary">eif2g</name>
    <name type="ordered locus">MK1447</name>
</gene>
<accession>Q8TVE5</accession>
<organism>
    <name type="scientific">Methanopyrus kandleri (strain AV19 / DSM 6324 / JCM 9639 / NBRC 100938)</name>
    <dbReference type="NCBI Taxonomy" id="190192"/>
    <lineage>
        <taxon>Archaea</taxon>
        <taxon>Methanobacteriati</taxon>
        <taxon>Methanobacteriota</taxon>
        <taxon>Methanomada group</taxon>
        <taxon>Methanopyri</taxon>
        <taxon>Methanopyrales</taxon>
        <taxon>Methanopyraceae</taxon>
        <taxon>Methanopyrus</taxon>
    </lineage>
</organism>
<name>IF2G_METKA</name>
<protein>
    <recommendedName>
        <fullName evidence="1">Translation initiation factor 2 subunit gamma</fullName>
        <ecNumber evidence="1">3.6.5.3</ecNumber>
    </recommendedName>
    <alternativeName>
        <fullName evidence="1">aIF2-gamma</fullName>
    </alternativeName>
    <alternativeName>
        <fullName evidence="1">eIF-2-gamma</fullName>
    </alternativeName>
</protein>
<feature type="chain" id="PRO_0000137455" description="Translation initiation factor 2 subunit gamma">
    <location>
        <begin position="1"/>
        <end position="412"/>
    </location>
</feature>
<feature type="domain" description="tr-type G" evidence="1">
    <location>
        <begin position="8"/>
        <end position="205"/>
    </location>
</feature>
<feature type="region of interest" description="G1" evidence="1">
    <location>
        <begin position="17"/>
        <end position="24"/>
    </location>
</feature>
<feature type="region of interest" description="G2" evidence="1">
    <location>
        <begin position="45"/>
        <end position="49"/>
    </location>
</feature>
<feature type="region of interest" description="G3" evidence="1">
    <location>
        <begin position="89"/>
        <end position="92"/>
    </location>
</feature>
<feature type="region of interest" description="G4" evidence="1">
    <location>
        <begin position="145"/>
        <end position="148"/>
    </location>
</feature>
<feature type="region of interest" description="G5" evidence="1">
    <location>
        <begin position="183"/>
        <end position="185"/>
    </location>
</feature>
<feature type="binding site" evidence="1">
    <location>
        <begin position="20"/>
        <end position="25"/>
    </location>
    <ligand>
        <name>GTP</name>
        <dbReference type="ChEBI" id="CHEBI:37565"/>
    </ligand>
</feature>
<feature type="binding site" evidence="1">
    <location>
        <position position="20"/>
    </location>
    <ligand>
        <name>Mg(2+)</name>
        <dbReference type="ChEBI" id="CHEBI:18420"/>
        <label>2</label>
    </ligand>
</feature>
<feature type="binding site" evidence="1">
    <location>
        <position position="24"/>
    </location>
    <ligand>
        <name>Mg(2+)</name>
        <dbReference type="ChEBI" id="CHEBI:18420"/>
        <label>1</label>
    </ligand>
</feature>
<feature type="binding site" evidence="1">
    <location>
        <position position="45"/>
    </location>
    <ligand>
        <name>Mg(2+)</name>
        <dbReference type="ChEBI" id="CHEBI:18420"/>
        <label>2</label>
    </ligand>
</feature>
<feature type="binding site" evidence="1">
    <location>
        <position position="47"/>
    </location>
    <ligand>
        <name>Mg(2+)</name>
        <dbReference type="ChEBI" id="CHEBI:18420"/>
        <label>1</label>
    </ligand>
</feature>
<feature type="binding site" evidence="1">
    <location>
        <position position="60"/>
    </location>
    <ligand>
        <name>Zn(2+)</name>
        <dbReference type="ChEBI" id="CHEBI:29105"/>
    </ligand>
</feature>
<feature type="binding site" evidence="1">
    <location>
        <position position="63"/>
    </location>
    <ligand>
        <name>Zn(2+)</name>
        <dbReference type="ChEBI" id="CHEBI:29105"/>
    </ligand>
</feature>
<feature type="binding site" evidence="1">
    <location>
        <position position="72"/>
    </location>
    <ligand>
        <name>Zn(2+)</name>
        <dbReference type="ChEBI" id="CHEBI:29105"/>
    </ligand>
</feature>
<feature type="binding site" evidence="1">
    <location>
        <position position="75"/>
    </location>
    <ligand>
        <name>Zn(2+)</name>
        <dbReference type="ChEBI" id="CHEBI:29105"/>
    </ligand>
</feature>
<feature type="binding site" evidence="1">
    <location>
        <begin position="145"/>
        <end position="148"/>
    </location>
    <ligand>
        <name>GTP</name>
        <dbReference type="ChEBI" id="CHEBI:37565"/>
    </ligand>
</feature>
<feature type="binding site" evidence="1">
    <location>
        <begin position="183"/>
        <end position="185"/>
    </location>
    <ligand>
        <name>GTP</name>
        <dbReference type="ChEBI" id="CHEBI:37565"/>
    </ligand>
</feature>
<dbReference type="EC" id="3.6.5.3" evidence="1"/>
<dbReference type="EMBL" id="AE009439">
    <property type="protein sequence ID" value="AAM02660.1"/>
    <property type="molecule type" value="Genomic_DNA"/>
</dbReference>
<dbReference type="RefSeq" id="WP_011019815.1">
    <property type="nucleotide sequence ID" value="NC_003551.1"/>
</dbReference>
<dbReference type="SMR" id="Q8TVE5"/>
<dbReference type="FunCoup" id="Q8TVE5">
    <property type="interactions" value="171"/>
</dbReference>
<dbReference type="STRING" id="190192.MK1447"/>
<dbReference type="PaxDb" id="190192-MK1447"/>
<dbReference type="EnsemblBacteria" id="AAM02660">
    <property type="protein sequence ID" value="AAM02660"/>
    <property type="gene ID" value="MK1447"/>
</dbReference>
<dbReference type="GeneID" id="1478042"/>
<dbReference type="KEGG" id="mka:MK1447"/>
<dbReference type="PATRIC" id="fig|190192.8.peg.1603"/>
<dbReference type="HOGENOM" id="CLU_027154_0_1_2"/>
<dbReference type="InParanoid" id="Q8TVE5"/>
<dbReference type="OrthoDB" id="7798at2157"/>
<dbReference type="Proteomes" id="UP000001826">
    <property type="component" value="Chromosome"/>
</dbReference>
<dbReference type="GO" id="GO:0005829">
    <property type="term" value="C:cytosol"/>
    <property type="evidence" value="ECO:0007669"/>
    <property type="project" value="TreeGrafter"/>
</dbReference>
<dbReference type="GO" id="GO:0005525">
    <property type="term" value="F:GTP binding"/>
    <property type="evidence" value="ECO:0007669"/>
    <property type="project" value="UniProtKB-UniRule"/>
</dbReference>
<dbReference type="GO" id="GO:0003924">
    <property type="term" value="F:GTPase activity"/>
    <property type="evidence" value="ECO:0007669"/>
    <property type="project" value="InterPro"/>
</dbReference>
<dbReference type="GO" id="GO:0046872">
    <property type="term" value="F:metal ion binding"/>
    <property type="evidence" value="ECO:0007669"/>
    <property type="project" value="UniProtKB-KW"/>
</dbReference>
<dbReference type="GO" id="GO:0003746">
    <property type="term" value="F:translation elongation factor activity"/>
    <property type="evidence" value="ECO:0007669"/>
    <property type="project" value="UniProtKB-UniRule"/>
</dbReference>
<dbReference type="GO" id="GO:0003743">
    <property type="term" value="F:translation initiation factor activity"/>
    <property type="evidence" value="ECO:0007669"/>
    <property type="project" value="UniProtKB-KW"/>
</dbReference>
<dbReference type="GO" id="GO:0000049">
    <property type="term" value="F:tRNA binding"/>
    <property type="evidence" value="ECO:0007669"/>
    <property type="project" value="InterPro"/>
</dbReference>
<dbReference type="GO" id="GO:0001731">
    <property type="term" value="P:formation of translation preinitiation complex"/>
    <property type="evidence" value="ECO:0007669"/>
    <property type="project" value="TreeGrafter"/>
</dbReference>
<dbReference type="CDD" id="cd01888">
    <property type="entry name" value="eIF2_gamma"/>
    <property type="match status" value="1"/>
</dbReference>
<dbReference type="CDD" id="cd03688">
    <property type="entry name" value="eIF2_gamma_II"/>
    <property type="match status" value="1"/>
</dbReference>
<dbReference type="CDD" id="cd15490">
    <property type="entry name" value="eIF2_gamma_III"/>
    <property type="match status" value="1"/>
</dbReference>
<dbReference type="FunFam" id="2.40.30.10:FF:000009">
    <property type="entry name" value="Eukaryotic translation initiation factor 2 subunit gamma"/>
    <property type="match status" value="1"/>
</dbReference>
<dbReference type="FunFam" id="3.40.50.300:FF:000065">
    <property type="entry name" value="Eukaryotic translation initiation factor 2 subunit gamma"/>
    <property type="match status" value="1"/>
</dbReference>
<dbReference type="FunFam" id="2.40.30.10:FF:000075">
    <property type="entry name" value="Translation initiation factor 2 subunit gamma"/>
    <property type="match status" value="1"/>
</dbReference>
<dbReference type="Gene3D" id="3.40.50.300">
    <property type="entry name" value="P-loop containing nucleotide triphosphate hydrolases"/>
    <property type="match status" value="1"/>
</dbReference>
<dbReference type="Gene3D" id="2.40.30.10">
    <property type="entry name" value="Translation factors"/>
    <property type="match status" value="2"/>
</dbReference>
<dbReference type="HAMAP" id="MF_00119">
    <property type="entry name" value="eIF_2_gamma"/>
    <property type="match status" value="1"/>
</dbReference>
<dbReference type="InterPro" id="IPR050543">
    <property type="entry name" value="eIF2G"/>
</dbReference>
<dbReference type="InterPro" id="IPR015256">
    <property type="entry name" value="eIF2g_C"/>
</dbReference>
<dbReference type="InterPro" id="IPR044127">
    <property type="entry name" value="eIF2g_dom_2"/>
</dbReference>
<dbReference type="InterPro" id="IPR044128">
    <property type="entry name" value="eIF2g_GTP-bd"/>
</dbReference>
<dbReference type="InterPro" id="IPR027417">
    <property type="entry name" value="P-loop_NTPase"/>
</dbReference>
<dbReference type="InterPro" id="IPR005225">
    <property type="entry name" value="Small_GTP-bd"/>
</dbReference>
<dbReference type="InterPro" id="IPR000795">
    <property type="entry name" value="T_Tr_GTP-bd_dom"/>
</dbReference>
<dbReference type="InterPro" id="IPR022424">
    <property type="entry name" value="TIF2_gsu"/>
</dbReference>
<dbReference type="InterPro" id="IPR009000">
    <property type="entry name" value="Transl_B-barrel_sf"/>
</dbReference>
<dbReference type="InterPro" id="IPR009001">
    <property type="entry name" value="Transl_elong_EF1A/Init_IF2_C"/>
</dbReference>
<dbReference type="NCBIfam" id="TIGR03680">
    <property type="entry name" value="eif2g_arch"/>
    <property type="match status" value="1"/>
</dbReference>
<dbReference type="NCBIfam" id="NF003077">
    <property type="entry name" value="PRK04000.1"/>
    <property type="match status" value="1"/>
</dbReference>
<dbReference type="NCBIfam" id="TIGR00231">
    <property type="entry name" value="small_GTP"/>
    <property type="match status" value="1"/>
</dbReference>
<dbReference type="PANTHER" id="PTHR42854">
    <property type="entry name" value="EUKARYOTIC TRANSLATION INITIATION FACTOR 2 SUBUNIT 3 FAMILY MEMBER"/>
    <property type="match status" value="1"/>
</dbReference>
<dbReference type="PANTHER" id="PTHR42854:SF3">
    <property type="entry name" value="EUKARYOTIC TRANSLATION INITIATION FACTOR 2 SUBUNIT 3-RELATED"/>
    <property type="match status" value="1"/>
</dbReference>
<dbReference type="Pfam" id="PF09173">
    <property type="entry name" value="eIF2_C"/>
    <property type="match status" value="1"/>
</dbReference>
<dbReference type="Pfam" id="PF00009">
    <property type="entry name" value="GTP_EFTU"/>
    <property type="match status" value="1"/>
</dbReference>
<dbReference type="PRINTS" id="PR00315">
    <property type="entry name" value="ELONGATNFCT"/>
</dbReference>
<dbReference type="SUPFAM" id="SSF50465">
    <property type="entry name" value="EF-Tu/eEF-1alpha/eIF2-gamma C-terminal domain"/>
    <property type="match status" value="1"/>
</dbReference>
<dbReference type="SUPFAM" id="SSF52540">
    <property type="entry name" value="P-loop containing nucleoside triphosphate hydrolases"/>
    <property type="match status" value="1"/>
</dbReference>
<dbReference type="SUPFAM" id="SSF50447">
    <property type="entry name" value="Translation proteins"/>
    <property type="match status" value="1"/>
</dbReference>
<dbReference type="PROSITE" id="PS51722">
    <property type="entry name" value="G_TR_2"/>
    <property type="match status" value="1"/>
</dbReference>
<reference key="1">
    <citation type="journal article" date="2002" name="Proc. Natl. Acad. Sci. U.S.A.">
        <title>The complete genome of hyperthermophile Methanopyrus kandleri AV19 and monophyly of archaeal methanogens.</title>
        <authorList>
            <person name="Slesarev A.I."/>
            <person name="Mezhevaya K.V."/>
            <person name="Makarova K.S."/>
            <person name="Polushin N.N."/>
            <person name="Shcherbinina O.V."/>
            <person name="Shakhova V.V."/>
            <person name="Belova G.I."/>
            <person name="Aravind L."/>
            <person name="Natale D.A."/>
            <person name="Rogozin I.B."/>
            <person name="Tatusov R.L."/>
            <person name="Wolf Y.I."/>
            <person name="Stetter K.O."/>
            <person name="Malykh A.G."/>
            <person name="Koonin E.V."/>
            <person name="Kozyavkin S.A."/>
        </authorList>
    </citation>
    <scope>NUCLEOTIDE SEQUENCE [LARGE SCALE GENOMIC DNA]</scope>
    <source>
        <strain>AV19 / DSM 6324 / JCM 9639 / NBRC 100938</strain>
    </source>
</reference>
<keyword id="KW-0342">GTP-binding</keyword>
<keyword id="KW-0378">Hydrolase</keyword>
<keyword id="KW-0396">Initiation factor</keyword>
<keyword id="KW-0460">Magnesium</keyword>
<keyword id="KW-0479">Metal-binding</keyword>
<keyword id="KW-0547">Nucleotide-binding</keyword>
<keyword id="KW-0648">Protein biosynthesis</keyword>
<keyword id="KW-1185">Reference proteome</keyword>
<keyword id="KW-0862">Zinc</keyword>
<proteinExistence type="inferred from homology"/>
<sequence length="412" mass="45776">MDDERFQQAEMNIGMVGHVDHGKTTLTKALSGVWTDTHSEETRRGISIRLGYADTVLTRCPECDTYSVEEKCPECGAETEWLRRVSFVDSPGHETLMATMLSGAAIMDAAILVIAANEPCPQPQTREHLMALEIIGTEDVIVVQNKIDLVTPEEAREHYEQIVQFLEEETHLDPDKTPIIPVSAQHKANLDVLVEAMYEHFEPPEYDLDAPFRMYIARSFDVNKPGTRPSDLKGGVIGGAIVQGEVEIGDEIEIRPGIRVERYGRTEWEPVYTEVVSLHANVTPVERARPGGLVGIGTKLDPTMTKADRLSGQVAGEPDTLPPVRHELLLEVELLERVVGTEEERKVEPIRTNEVLMLTVGTATTVGVVTSARDDEIEIKLKQPVCAEEGDRVAISRRIQRWRLIGHGVIKG</sequence>
<evidence type="ECO:0000255" key="1">
    <source>
        <dbReference type="HAMAP-Rule" id="MF_00119"/>
    </source>
</evidence>
<comment type="function">
    <text evidence="1">eIF-2 functions in the early steps of protein synthesis by forming a ternary complex with GTP and initiator tRNA.</text>
</comment>
<comment type="catalytic activity">
    <reaction evidence="1">
        <text>GTP + H2O = GDP + phosphate + H(+)</text>
        <dbReference type="Rhea" id="RHEA:19669"/>
        <dbReference type="ChEBI" id="CHEBI:15377"/>
        <dbReference type="ChEBI" id="CHEBI:15378"/>
        <dbReference type="ChEBI" id="CHEBI:37565"/>
        <dbReference type="ChEBI" id="CHEBI:43474"/>
        <dbReference type="ChEBI" id="CHEBI:58189"/>
        <dbReference type="EC" id="3.6.5.3"/>
    </reaction>
</comment>
<comment type="cofactor">
    <cofactor evidence="1">
        <name>Mg(2+)</name>
        <dbReference type="ChEBI" id="CHEBI:18420"/>
    </cofactor>
</comment>
<comment type="subunit">
    <text evidence="1">Heterotrimer composed of an alpha, a beta and a gamma chain.</text>
</comment>
<comment type="similarity">
    <text evidence="1">Belongs to the TRAFAC class translation factor GTPase superfamily. Classic translation factor GTPase family. EIF2G subfamily.</text>
</comment>